<evidence type="ECO:0000255" key="1">
    <source>
        <dbReference type="HAMAP-Rule" id="MF_00693"/>
    </source>
</evidence>
<dbReference type="EMBL" id="AP008971">
    <property type="protein sequence ID" value="BAG08311.1"/>
    <property type="molecule type" value="Genomic_DNA"/>
</dbReference>
<dbReference type="RefSeq" id="WP_012290694.1">
    <property type="nucleotide sequence ID" value="NC_010376.1"/>
</dbReference>
<dbReference type="SMR" id="B0S1S1"/>
<dbReference type="STRING" id="334413.FMG_0893"/>
<dbReference type="KEGG" id="fma:FMG_0893"/>
<dbReference type="eggNOG" id="COG0217">
    <property type="taxonomic scope" value="Bacteria"/>
</dbReference>
<dbReference type="HOGENOM" id="CLU_062974_2_2_9"/>
<dbReference type="Proteomes" id="UP000001319">
    <property type="component" value="Chromosome"/>
</dbReference>
<dbReference type="GO" id="GO:0005829">
    <property type="term" value="C:cytosol"/>
    <property type="evidence" value="ECO:0007669"/>
    <property type="project" value="TreeGrafter"/>
</dbReference>
<dbReference type="GO" id="GO:0003677">
    <property type="term" value="F:DNA binding"/>
    <property type="evidence" value="ECO:0007669"/>
    <property type="project" value="UniProtKB-UniRule"/>
</dbReference>
<dbReference type="GO" id="GO:0006355">
    <property type="term" value="P:regulation of DNA-templated transcription"/>
    <property type="evidence" value="ECO:0007669"/>
    <property type="project" value="UniProtKB-UniRule"/>
</dbReference>
<dbReference type="FunFam" id="1.10.10.200:FF:000002">
    <property type="entry name" value="Probable transcriptional regulatory protein CLM62_37755"/>
    <property type="match status" value="1"/>
</dbReference>
<dbReference type="Gene3D" id="1.10.10.200">
    <property type="match status" value="1"/>
</dbReference>
<dbReference type="Gene3D" id="3.30.70.980">
    <property type="match status" value="2"/>
</dbReference>
<dbReference type="HAMAP" id="MF_00693">
    <property type="entry name" value="Transcrip_reg_TACO1"/>
    <property type="match status" value="1"/>
</dbReference>
<dbReference type="InterPro" id="IPR017856">
    <property type="entry name" value="Integrase-like_N"/>
</dbReference>
<dbReference type="InterPro" id="IPR048300">
    <property type="entry name" value="TACO1_YebC-like_2nd/3rd_dom"/>
</dbReference>
<dbReference type="InterPro" id="IPR049083">
    <property type="entry name" value="TACO1_YebC_N"/>
</dbReference>
<dbReference type="InterPro" id="IPR002876">
    <property type="entry name" value="Transcrip_reg_TACO1-like"/>
</dbReference>
<dbReference type="InterPro" id="IPR026564">
    <property type="entry name" value="Transcrip_reg_TACO1-like_dom3"/>
</dbReference>
<dbReference type="InterPro" id="IPR029072">
    <property type="entry name" value="YebC-like"/>
</dbReference>
<dbReference type="NCBIfam" id="NF001030">
    <property type="entry name" value="PRK00110.1"/>
    <property type="match status" value="1"/>
</dbReference>
<dbReference type="NCBIfam" id="NF009044">
    <property type="entry name" value="PRK12378.1"/>
    <property type="match status" value="1"/>
</dbReference>
<dbReference type="NCBIfam" id="TIGR01033">
    <property type="entry name" value="YebC/PmpR family DNA-binding transcriptional regulator"/>
    <property type="match status" value="1"/>
</dbReference>
<dbReference type="PANTHER" id="PTHR12532:SF6">
    <property type="entry name" value="TRANSCRIPTIONAL REGULATORY PROTEIN YEBC-RELATED"/>
    <property type="match status" value="1"/>
</dbReference>
<dbReference type="PANTHER" id="PTHR12532">
    <property type="entry name" value="TRANSLATIONAL ACTIVATOR OF CYTOCHROME C OXIDASE 1"/>
    <property type="match status" value="1"/>
</dbReference>
<dbReference type="Pfam" id="PF20772">
    <property type="entry name" value="TACO1_YebC_N"/>
    <property type="match status" value="1"/>
</dbReference>
<dbReference type="Pfam" id="PF01709">
    <property type="entry name" value="Transcrip_reg"/>
    <property type="match status" value="1"/>
</dbReference>
<dbReference type="SUPFAM" id="SSF75625">
    <property type="entry name" value="YebC-like"/>
    <property type="match status" value="1"/>
</dbReference>
<comment type="subcellular location">
    <subcellularLocation>
        <location evidence="1">Cytoplasm</location>
    </subcellularLocation>
</comment>
<comment type="similarity">
    <text evidence="1">Belongs to the TACO1 family.</text>
</comment>
<protein>
    <recommendedName>
        <fullName evidence="1">Probable transcriptional regulatory protein FMG_0893</fullName>
    </recommendedName>
</protein>
<name>Y893_FINM2</name>
<gene>
    <name type="ordered locus">FMG_0893</name>
</gene>
<organism>
    <name type="scientific">Finegoldia magna (strain ATCC 29328 / DSM 20472 / WAL 2508)</name>
    <name type="common">Peptostreptococcus magnus</name>
    <dbReference type="NCBI Taxonomy" id="334413"/>
    <lineage>
        <taxon>Bacteria</taxon>
        <taxon>Bacillati</taxon>
        <taxon>Bacillota</taxon>
        <taxon>Tissierellia</taxon>
        <taxon>Tissierellales</taxon>
        <taxon>Peptoniphilaceae</taxon>
        <taxon>Finegoldia</taxon>
    </lineage>
</organism>
<accession>B0S1S1</accession>
<feature type="chain" id="PRO_1000132193" description="Probable transcriptional regulatory protein FMG_0893">
    <location>
        <begin position="1"/>
        <end position="241"/>
    </location>
</feature>
<proteinExistence type="inferred from homology"/>
<reference key="1">
    <citation type="journal article" date="2008" name="DNA Res.">
        <title>Complete genome sequence of Finegoldia magna, an anaerobic opportunistic pathogen.</title>
        <authorList>
            <person name="Goto T."/>
            <person name="Yamashita A."/>
            <person name="Hirakawa H."/>
            <person name="Matsutani M."/>
            <person name="Todo K."/>
            <person name="Ohshima K."/>
            <person name="Toh H."/>
            <person name="Miyamoto K."/>
            <person name="Kuhara S."/>
            <person name="Hattori M."/>
            <person name="Shimizu T."/>
            <person name="Akimoto S."/>
        </authorList>
    </citation>
    <scope>NUCLEOTIDE SEQUENCE [LARGE SCALE GENOMIC DNA]</scope>
    <source>
        <strain>ATCC 29328 / DSM 20472 / WAL 2508</strain>
    </source>
</reference>
<sequence length="241" mass="26957">MSGHNKWSKIKNKKGSEDARRGKIFTKMARAITVAVREGGADPEYNPSLKSVIEKARAENMPNDNIDRAIKKASGDGDSANYENIVYEGYGPEGVAVIVECLTDNRNRTASDVRHYFDKFGGNLGQNGSVSFMFQRKGLLLIDADSLDEEEVMMDSLDAGAEDFEADDGIFVINTAMEDFAQVRDTLLDKGYKFVKSDLVYEPSNYVKINDESNVDKMEKLIDNLEDSDDVQQVSHNWDNE</sequence>
<keyword id="KW-0963">Cytoplasm</keyword>
<keyword id="KW-0238">DNA-binding</keyword>
<keyword id="KW-1185">Reference proteome</keyword>
<keyword id="KW-0804">Transcription</keyword>
<keyword id="KW-0805">Transcription regulation</keyword>